<comment type="function">
    <text evidence="1">One of the primary rRNA binding proteins, this protein initially binds near the 5'-end of the 23S rRNA. It is important during the early stages of 50S assembly. It makes multiple contacts with different domains of the 23S rRNA in the assembled 50S subunit and ribosome.</text>
</comment>
<comment type="function">
    <text evidence="1">Forms part of the polypeptide exit tunnel.</text>
</comment>
<comment type="subunit">
    <text evidence="1">Part of the 50S ribosomal subunit.</text>
</comment>
<comment type="similarity">
    <text evidence="1">Belongs to the universal ribosomal protein uL4 family.</text>
</comment>
<evidence type="ECO:0000255" key="1">
    <source>
        <dbReference type="HAMAP-Rule" id="MF_01328"/>
    </source>
</evidence>
<evidence type="ECO:0000256" key="2">
    <source>
        <dbReference type="SAM" id="MobiDB-lite"/>
    </source>
</evidence>
<evidence type="ECO:0000305" key="3"/>
<protein>
    <recommendedName>
        <fullName evidence="1">Large ribosomal subunit protein uL4</fullName>
    </recommendedName>
    <alternativeName>
        <fullName evidence="3">50S ribosomal protein L4</fullName>
    </alternativeName>
</protein>
<name>RL4_PROMP</name>
<organism>
    <name type="scientific">Prochlorococcus marinus subsp. pastoris (strain CCMP1986 / NIES-2087 / MED4)</name>
    <dbReference type="NCBI Taxonomy" id="59919"/>
    <lineage>
        <taxon>Bacteria</taxon>
        <taxon>Bacillati</taxon>
        <taxon>Cyanobacteriota</taxon>
        <taxon>Cyanophyceae</taxon>
        <taxon>Synechococcales</taxon>
        <taxon>Prochlorococcaceae</taxon>
        <taxon>Prochlorococcus</taxon>
    </lineage>
</organism>
<proteinExistence type="inferred from homology"/>
<gene>
    <name evidence="1" type="primary">rplD</name>
    <name evidence="1" type="synonym">rpl4</name>
    <name type="ordered locus">PMM1557</name>
</gene>
<feature type="chain" id="PRO_0000129258" description="Large ribosomal subunit protein uL4">
    <location>
        <begin position="1"/>
        <end position="210"/>
    </location>
</feature>
<feature type="region of interest" description="Disordered" evidence="2">
    <location>
        <begin position="44"/>
        <end position="94"/>
    </location>
</feature>
<feature type="compositionally biased region" description="Polar residues" evidence="2">
    <location>
        <begin position="44"/>
        <end position="54"/>
    </location>
</feature>
<feature type="compositionally biased region" description="Basic residues" evidence="2">
    <location>
        <begin position="60"/>
        <end position="71"/>
    </location>
</feature>
<reference key="1">
    <citation type="journal article" date="2003" name="Nature">
        <title>Genome divergence in two Prochlorococcus ecotypes reflects oceanic niche differentiation.</title>
        <authorList>
            <person name="Rocap G."/>
            <person name="Larimer F.W."/>
            <person name="Lamerdin J.E."/>
            <person name="Malfatti S."/>
            <person name="Chain P."/>
            <person name="Ahlgren N.A."/>
            <person name="Arellano A."/>
            <person name="Coleman M."/>
            <person name="Hauser L."/>
            <person name="Hess W.R."/>
            <person name="Johnson Z.I."/>
            <person name="Land M.L."/>
            <person name="Lindell D."/>
            <person name="Post A.F."/>
            <person name="Regala W."/>
            <person name="Shah M."/>
            <person name="Shaw S.L."/>
            <person name="Steglich C."/>
            <person name="Sullivan M.B."/>
            <person name="Ting C.S."/>
            <person name="Tolonen A."/>
            <person name="Webb E.A."/>
            <person name="Zinser E.R."/>
            <person name="Chisholm S.W."/>
        </authorList>
    </citation>
    <scope>NUCLEOTIDE SEQUENCE [LARGE SCALE GENOMIC DNA]</scope>
    <source>
        <strain>CCMP1986 / NIES-2087 / MED4</strain>
    </source>
</reference>
<keyword id="KW-0687">Ribonucleoprotein</keyword>
<keyword id="KW-0689">Ribosomal protein</keyword>
<keyword id="KW-0694">RNA-binding</keyword>
<keyword id="KW-0699">rRNA-binding</keyword>
<accession>Q7UZU8</accession>
<sequence>MTTLETLKWDGKKAGKVSIDLKVAKETSSADLIHRAVLRQLANKRQGTASTLTRSEVRGGGRKPYKQKGTGRARQGSIRTPLRPGGGVIFGPKPRSYNLDMNRKERRLALRTALMSRISDFKTVEDFGSTLDQPKTSEIINGLSRLGIEKTEKVLVILDNPSDVIKKSINNLEKVKLIAADQLNVFDILNANKLVIGQSAINKIQEVYAS</sequence>
<dbReference type="EMBL" id="BX548174">
    <property type="protein sequence ID" value="CAE20016.1"/>
    <property type="molecule type" value="Genomic_DNA"/>
</dbReference>
<dbReference type="RefSeq" id="WP_011133185.1">
    <property type="nucleotide sequence ID" value="NC_005072.1"/>
</dbReference>
<dbReference type="SMR" id="Q7UZU8"/>
<dbReference type="STRING" id="59919.PMM1557"/>
<dbReference type="KEGG" id="pmm:PMM1557"/>
<dbReference type="eggNOG" id="COG0088">
    <property type="taxonomic scope" value="Bacteria"/>
</dbReference>
<dbReference type="HOGENOM" id="CLU_041575_5_2_3"/>
<dbReference type="OrthoDB" id="9803201at2"/>
<dbReference type="Proteomes" id="UP000001026">
    <property type="component" value="Chromosome"/>
</dbReference>
<dbReference type="GO" id="GO:1990904">
    <property type="term" value="C:ribonucleoprotein complex"/>
    <property type="evidence" value="ECO:0007669"/>
    <property type="project" value="UniProtKB-KW"/>
</dbReference>
<dbReference type="GO" id="GO:0005840">
    <property type="term" value="C:ribosome"/>
    <property type="evidence" value="ECO:0007669"/>
    <property type="project" value="UniProtKB-KW"/>
</dbReference>
<dbReference type="GO" id="GO:0019843">
    <property type="term" value="F:rRNA binding"/>
    <property type="evidence" value="ECO:0007669"/>
    <property type="project" value="UniProtKB-UniRule"/>
</dbReference>
<dbReference type="GO" id="GO:0003735">
    <property type="term" value="F:structural constituent of ribosome"/>
    <property type="evidence" value="ECO:0007669"/>
    <property type="project" value="InterPro"/>
</dbReference>
<dbReference type="GO" id="GO:0006412">
    <property type="term" value="P:translation"/>
    <property type="evidence" value="ECO:0007669"/>
    <property type="project" value="UniProtKB-UniRule"/>
</dbReference>
<dbReference type="Gene3D" id="3.40.1370.10">
    <property type="match status" value="1"/>
</dbReference>
<dbReference type="HAMAP" id="MF_01328_B">
    <property type="entry name" value="Ribosomal_uL4_B"/>
    <property type="match status" value="1"/>
</dbReference>
<dbReference type="InterPro" id="IPR002136">
    <property type="entry name" value="Ribosomal_uL4"/>
</dbReference>
<dbReference type="InterPro" id="IPR013005">
    <property type="entry name" value="Ribosomal_uL4-like"/>
</dbReference>
<dbReference type="InterPro" id="IPR023574">
    <property type="entry name" value="Ribosomal_uL4_dom_sf"/>
</dbReference>
<dbReference type="NCBIfam" id="TIGR03953">
    <property type="entry name" value="rplD_bact"/>
    <property type="match status" value="1"/>
</dbReference>
<dbReference type="PANTHER" id="PTHR10746">
    <property type="entry name" value="50S RIBOSOMAL PROTEIN L4"/>
    <property type="match status" value="1"/>
</dbReference>
<dbReference type="PANTHER" id="PTHR10746:SF17">
    <property type="entry name" value="LARGE RIBOSOMAL SUBUNIT PROTEIN UL4C"/>
    <property type="match status" value="1"/>
</dbReference>
<dbReference type="Pfam" id="PF00573">
    <property type="entry name" value="Ribosomal_L4"/>
    <property type="match status" value="1"/>
</dbReference>
<dbReference type="SUPFAM" id="SSF52166">
    <property type="entry name" value="Ribosomal protein L4"/>
    <property type="match status" value="1"/>
</dbReference>